<organism>
    <name type="scientific">Methanococcus voltae (strain ATCC BAA-1334 / A3)</name>
    <dbReference type="NCBI Taxonomy" id="456320"/>
    <lineage>
        <taxon>Archaea</taxon>
        <taxon>Methanobacteriati</taxon>
        <taxon>Methanobacteriota</taxon>
        <taxon>Methanomada group</taxon>
        <taxon>Methanococci</taxon>
        <taxon>Methanococcales</taxon>
        <taxon>Methanococcaceae</taxon>
        <taxon>Methanococcus</taxon>
    </lineage>
</organism>
<reference key="1">
    <citation type="submission" date="2010-05" db="EMBL/GenBank/DDBJ databases">
        <title>Complete sequence of Methanococcus voltae A3.</title>
        <authorList>
            <consortium name="US DOE Joint Genome Institute"/>
            <person name="Lucas S."/>
            <person name="Copeland A."/>
            <person name="Lapidus A."/>
            <person name="Cheng J.-F."/>
            <person name="Bruce D."/>
            <person name="Goodwin L."/>
            <person name="Pitluck S."/>
            <person name="Lowry S."/>
            <person name="Clum A."/>
            <person name="Land M."/>
            <person name="Hauser L."/>
            <person name="Kyrpides N."/>
            <person name="Mikhailova N."/>
            <person name="Whitman W.B."/>
            <person name="Woyke T."/>
        </authorList>
    </citation>
    <scope>NUCLEOTIDE SEQUENCE [LARGE SCALE GENOMIC DNA]</scope>
    <source>
        <strain>ATCC BAA-1334 / A3</strain>
    </source>
</reference>
<accession>D7DRZ8</accession>
<sequence>MYIGIDDTDSREKYCTTYVGTLIVEELLKLGYILEEPRLIRMNPMVKYKTRGNGGVCLKIVGKIGAEDTKKNNSNKNNSNNGTPKNIEYDYKQALEDFNRGNIDYEALSKESNCKSSLKSHIKSLKSLKSYRTTLNPEITEESYKLSKSEYLEVKTIVSSIVEKYTDFDCSTTNPGIVLINSRLTRQKKAILKNYYNSVLTEIVSLDEAEAIIKKVGAEYIKYKKGLGIIGSLGAISSYFSENQTYTYELLAYRENDKWGTERYVIDSSVVEMDKMTYPYTFNNVDNNKNIIAPNTKCPVLYGIRGVSKEILFNAKEIVESENIDKYMIYRTNQGTDHHLRIMNIADARENTGAILSGYISEEFTEITGGHVLIELTDSTGSINCIAYEPTKKFRHIIRELAIGDLITVYGTIREEPYQLNIEKINVVKLNNLYEKVKKCECGGTLKSKGVSSGYKCNKCGKRLKYDEIPKIQIVRNLREGFYEVPPSARRHLSMPLSLINYLPNNLR</sequence>
<gene>
    <name evidence="1" type="primary">tiaS</name>
    <name type="ordered locus">Mvol_0248</name>
</gene>
<dbReference type="EC" id="6.3.4.22" evidence="1"/>
<dbReference type="EMBL" id="CP002057">
    <property type="protein sequence ID" value="ADI35908.1"/>
    <property type="molecule type" value="Genomic_DNA"/>
</dbReference>
<dbReference type="SMR" id="D7DRZ8"/>
<dbReference type="FunCoup" id="D7DRZ8">
    <property type="interactions" value="2"/>
</dbReference>
<dbReference type="STRING" id="456320.Mvol_0248"/>
<dbReference type="KEGG" id="mvo:Mvol_0248"/>
<dbReference type="eggNOG" id="arCOG01115">
    <property type="taxonomic scope" value="Archaea"/>
</dbReference>
<dbReference type="HOGENOM" id="CLU_675459_0_0_2"/>
<dbReference type="InParanoid" id="D7DRZ8"/>
<dbReference type="OrthoDB" id="39189at2157"/>
<dbReference type="Proteomes" id="UP000007722">
    <property type="component" value="Chromosome"/>
</dbReference>
<dbReference type="GO" id="GO:0005737">
    <property type="term" value="C:cytoplasm"/>
    <property type="evidence" value="ECO:0007669"/>
    <property type="project" value="UniProtKB-SubCell"/>
</dbReference>
<dbReference type="GO" id="GO:0005524">
    <property type="term" value="F:ATP binding"/>
    <property type="evidence" value="ECO:0007669"/>
    <property type="project" value="UniProtKB-KW"/>
</dbReference>
<dbReference type="GO" id="GO:0016879">
    <property type="term" value="F:ligase activity, forming carbon-nitrogen bonds"/>
    <property type="evidence" value="ECO:0007669"/>
    <property type="project" value="UniProtKB-UniRule"/>
</dbReference>
<dbReference type="GO" id="GO:0003676">
    <property type="term" value="F:nucleic acid binding"/>
    <property type="evidence" value="ECO:0007669"/>
    <property type="project" value="InterPro"/>
</dbReference>
<dbReference type="GO" id="GO:0002101">
    <property type="term" value="P:tRNA wobble cytosine modification"/>
    <property type="evidence" value="ECO:0007669"/>
    <property type="project" value="UniProtKB-UniRule"/>
</dbReference>
<dbReference type="CDD" id="cd04482">
    <property type="entry name" value="RPA2_OBF_like"/>
    <property type="match status" value="1"/>
</dbReference>
<dbReference type="Gene3D" id="2.40.50.1010">
    <property type="match status" value="1"/>
</dbReference>
<dbReference type="Gene3D" id="3.30.70.2200">
    <property type="match status" value="1"/>
</dbReference>
<dbReference type="Gene3D" id="3.90.600.20">
    <property type="match status" value="1"/>
</dbReference>
<dbReference type="HAMAP" id="MF_01892">
    <property type="entry name" value="tRNA_Ile2_agm2C_synt"/>
    <property type="match status" value="1"/>
</dbReference>
<dbReference type="InterPro" id="IPR004365">
    <property type="entry name" value="NA-bd_OB_tRNA"/>
</dbReference>
<dbReference type="InterPro" id="IPR053870">
    <property type="entry name" value="TiaS-like_TCKD"/>
</dbReference>
<dbReference type="InterPro" id="IPR013696">
    <property type="entry name" value="TiaS_FLD"/>
</dbReference>
<dbReference type="InterPro" id="IPR024913">
    <property type="entry name" value="tRNA_Ile2__agm2C_synt"/>
</dbReference>
<dbReference type="InterPro" id="IPR055394">
    <property type="entry name" value="Zn_ribbon_TiaS"/>
</dbReference>
<dbReference type="PANTHER" id="PTHR40705">
    <property type="entry name" value="TRNA(ILE2) 2-AGMATINYLCYTIDINE SYNTHETASE TIAS"/>
    <property type="match status" value="1"/>
</dbReference>
<dbReference type="PANTHER" id="PTHR40705:SF1">
    <property type="entry name" value="TRNA(ILE2) 2-AGMATINYLCYTIDINE SYNTHETASE TIAS"/>
    <property type="match status" value="1"/>
</dbReference>
<dbReference type="Pfam" id="PF08489">
    <property type="entry name" value="TiaS_FLD"/>
    <property type="match status" value="1"/>
</dbReference>
<dbReference type="Pfam" id="PF22641">
    <property type="entry name" value="TiaS_TCKD"/>
    <property type="match status" value="2"/>
</dbReference>
<dbReference type="Pfam" id="PF01336">
    <property type="entry name" value="tRNA_anti-codon"/>
    <property type="match status" value="1"/>
</dbReference>
<dbReference type="Pfam" id="PF23783">
    <property type="entry name" value="Zn_ribbon_TiaS"/>
    <property type="match status" value="1"/>
</dbReference>
<protein>
    <recommendedName>
        <fullName evidence="1">tRNA(Ile2) 2-agmatinylcytidine synthetase TiaS</fullName>
        <shortName evidence="1">tRNA(Ile2)-agm2C synthetase</shortName>
        <ecNumber evidence="1">6.3.4.22</ecNumber>
    </recommendedName>
    <alternativeName>
        <fullName evidence="1">tRNA(Ile2) agmatidine synthetase</fullName>
    </alternativeName>
</protein>
<keyword id="KW-0067">ATP-binding</keyword>
<keyword id="KW-0963">Cytoplasm</keyword>
<keyword id="KW-0436">Ligase</keyword>
<keyword id="KW-0547">Nucleotide-binding</keyword>
<keyword id="KW-1185">Reference proteome</keyword>
<keyword id="KW-0819">tRNA processing</keyword>
<proteinExistence type="inferred from homology"/>
<name>TIAS_METV3</name>
<feature type="chain" id="PRO_0000407295" description="tRNA(Ile2) 2-agmatinylcytidine synthetase TiaS">
    <location>
        <begin position="1"/>
        <end position="508"/>
    </location>
</feature>
<feature type="DNA-binding region" description="OB" evidence="1">
    <location>
        <begin position="367"/>
        <end position="427"/>
    </location>
</feature>
<comment type="function">
    <text evidence="1">ATP-dependent agmatine transferase that catalyzes the formation of 2-agmatinylcytidine (agm2C) at the wobble position (C34) of tRNA(Ile2), converting the codon specificity from AUG to AUA.</text>
</comment>
<comment type="catalytic activity">
    <reaction evidence="1">
        <text>cytidine(34) in tRNA(Ile2) + agmatine + ATP + H2O = 2-agmatinylcytidine(34) in tRNA(Ile2) + AMP + 2 phosphate + 2 H(+)</text>
        <dbReference type="Rhea" id="RHEA:43608"/>
        <dbReference type="Rhea" id="RHEA-COMP:10625"/>
        <dbReference type="Rhea" id="RHEA-COMP:10626"/>
        <dbReference type="ChEBI" id="CHEBI:15377"/>
        <dbReference type="ChEBI" id="CHEBI:15378"/>
        <dbReference type="ChEBI" id="CHEBI:30616"/>
        <dbReference type="ChEBI" id="CHEBI:43474"/>
        <dbReference type="ChEBI" id="CHEBI:58145"/>
        <dbReference type="ChEBI" id="CHEBI:82748"/>
        <dbReference type="ChEBI" id="CHEBI:83545"/>
        <dbReference type="ChEBI" id="CHEBI:456215"/>
        <dbReference type="EC" id="6.3.4.22"/>
    </reaction>
</comment>
<comment type="subcellular location">
    <subcellularLocation>
        <location evidence="1">Cytoplasm</location>
    </subcellularLocation>
</comment>
<comment type="similarity">
    <text evidence="1">Belongs to the TiaS family.</text>
</comment>
<evidence type="ECO:0000255" key="1">
    <source>
        <dbReference type="HAMAP-Rule" id="MF_01892"/>
    </source>
</evidence>